<keyword id="KW-0997">Cell inner membrane</keyword>
<keyword id="KW-1003">Cell membrane</keyword>
<keyword id="KW-0472">Membrane</keyword>
<keyword id="KW-0808">Transferase</keyword>
<keyword id="KW-0812">Transmembrane</keyword>
<keyword id="KW-1133">Transmembrane helix</keyword>
<evidence type="ECO:0000255" key="1">
    <source>
        <dbReference type="HAMAP-Rule" id="MF_01147"/>
    </source>
</evidence>
<protein>
    <recommendedName>
        <fullName evidence="1">Phosphatidylglycerol--prolipoprotein diacylglyceryl transferase</fullName>
        <ecNumber evidence="1">2.5.1.145</ecNumber>
    </recommendedName>
</protein>
<feature type="chain" id="PRO_1000053425" description="Phosphatidylglycerol--prolipoprotein diacylglyceryl transferase">
    <location>
        <begin position="1"/>
        <end position="291"/>
    </location>
</feature>
<feature type="transmembrane region" description="Helical" evidence="1">
    <location>
        <begin position="21"/>
        <end position="41"/>
    </location>
</feature>
<feature type="transmembrane region" description="Helical" evidence="1">
    <location>
        <begin position="60"/>
        <end position="80"/>
    </location>
</feature>
<feature type="transmembrane region" description="Helical" evidence="1">
    <location>
        <begin position="96"/>
        <end position="116"/>
    </location>
</feature>
<feature type="transmembrane region" description="Helical" evidence="1">
    <location>
        <begin position="225"/>
        <end position="245"/>
    </location>
</feature>
<feature type="transmembrane region" description="Helical" evidence="1">
    <location>
        <begin position="260"/>
        <end position="280"/>
    </location>
</feature>
<feature type="binding site" evidence="1">
    <location>
        <position position="143"/>
    </location>
    <ligand>
        <name>a 1,2-diacyl-sn-glycero-3-phospho-(1'-sn-glycerol)</name>
        <dbReference type="ChEBI" id="CHEBI:64716"/>
    </ligand>
</feature>
<comment type="function">
    <text evidence="1">Catalyzes the transfer of the diacylglyceryl group from phosphatidylglycerol to the sulfhydryl group of the N-terminal cysteine of a prolipoprotein, the first step in the formation of mature lipoproteins.</text>
</comment>
<comment type="catalytic activity">
    <reaction evidence="1">
        <text>L-cysteinyl-[prolipoprotein] + a 1,2-diacyl-sn-glycero-3-phospho-(1'-sn-glycerol) = an S-1,2-diacyl-sn-glyceryl-L-cysteinyl-[prolipoprotein] + sn-glycerol 1-phosphate + H(+)</text>
        <dbReference type="Rhea" id="RHEA:56712"/>
        <dbReference type="Rhea" id="RHEA-COMP:14679"/>
        <dbReference type="Rhea" id="RHEA-COMP:14680"/>
        <dbReference type="ChEBI" id="CHEBI:15378"/>
        <dbReference type="ChEBI" id="CHEBI:29950"/>
        <dbReference type="ChEBI" id="CHEBI:57685"/>
        <dbReference type="ChEBI" id="CHEBI:64716"/>
        <dbReference type="ChEBI" id="CHEBI:140658"/>
        <dbReference type="EC" id="2.5.1.145"/>
    </reaction>
</comment>
<comment type="pathway">
    <text evidence="1">Protein modification; lipoprotein biosynthesis (diacylglyceryl transfer).</text>
</comment>
<comment type="subcellular location">
    <subcellularLocation>
        <location evidence="1">Cell inner membrane</location>
        <topology evidence="1">Multi-pass membrane protein</topology>
    </subcellularLocation>
</comment>
<comment type="similarity">
    <text evidence="1">Belongs to the Lgt family.</text>
</comment>
<organism>
    <name type="scientific">Escherichia coli O6:K15:H31 (strain 536 / UPEC)</name>
    <dbReference type="NCBI Taxonomy" id="362663"/>
    <lineage>
        <taxon>Bacteria</taxon>
        <taxon>Pseudomonadati</taxon>
        <taxon>Pseudomonadota</taxon>
        <taxon>Gammaproteobacteria</taxon>
        <taxon>Enterobacterales</taxon>
        <taxon>Enterobacteriaceae</taxon>
        <taxon>Escherichia</taxon>
    </lineage>
</organism>
<accession>Q0TE04</accession>
<gene>
    <name evidence="1" type="primary">lgt</name>
    <name type="ordered locus">ECP_2841</name>
</gene>
<proteinExistence type="inferred from homology"/>
<dbReference type="EC" id="2.5.1.145" evidence="1"/>
<dbReference type="EMBL" id="CP000247">
    <property type="protein sequence ID" value="ABG70825.1"/>
    <property type="molecule type" value="Genomic_DNA"/>
</dbReference>
<dbReference type="RefSeq" id="WP_000204658.1">
    <property type="nucleotide sequence ID" value="NC_008253.1"/>
</dbReference>
<dbReference type="SMR" id="Q0TE04"/>
<dbReference type="GeneID" id="93779170"/>
<dbReference type="KEGG" id="ecp:ECP_2841"/>
<dbReference type="HOGENOM" id="CLU_013386_1_0_6"/>
<dbReference type="UniPathway" id="UPA00664"/>
<dbReference type="Proteomes" id="UP000009182">
    <property type="component" value="Chromosome"/>
</dbReference>
<dbReference type="GO" id="GO:0005886">
    <property type="term" value="C:plasma membrane"/>
    <property type="evidence" value="ECO:0007669"/>
    <property type="project" value="UniProtKB-SubCell"/>
</dbReference>
<dbReference type="GO" id="GO:0008961">
    <property type="term" value="F:phosphatidylglycerol-prolipoprotein diacylglyceryl transferase activity"/>
    <property type="evidence" value="ECO:0007669"/>
    <property type="project" value="UniProtKB-UniRule"/>
</dbReference>
<dbReference type="GO" id="GO:0042158">
    <property type="term" value="P:lipoprotein biosynthetic process"/>
    <property type="evidence" value="ECO:0007669"/>
    <property type="project" value="UniProtKB-UniRule"/>
</dbReference>
<dbReference type="HAMAP" id="MF_01147">
    <property type="entry name" value="Lgt"/>
    <property type="match status" value="1"/>
</dbReference>
<dbReference type="InterPro" id="IPR001640">
    <property type="entry name" value="Lgt"/>
</dbReference>
<dbReference type="NCBIfam" id="TIGR00544">
    <property type="entry name" value="lgt"/>
    <property type="match status" value="1"/>
</dbReference>
<dbReference type="PANTHER" id="PTHR30589:SF0">
    <property type="entry name" value="PHOSPHATIDYLGLYCEROL--PROLIPOPROTEIN DIACYLGLYCERYL TRANSFERASE"/>
    <property type="match status" value="1"/>
</dbReference>
<dbReference type="PANTHER" id="PTHR30589">
    <property type="entry name" value="PROLIPOPROTEIN DIACYLGLYCERYL TRANSFERASE"/>
    <property type="match status" value="1"/>
</dbReference>
<dbReference type="Pfam" id="PF01790">
    <property type="entry name" value="LGT"/>
    <property type="match status" value="1"/>
</dbReference>
<dbReference type="PROSITE" id="PS01311">
    <property type="entry name" value="LGT"/>
    <property type="match status" value="1"/>
</dbReference>
<reference key="1">
    <citation type="journal article" date="2006" name="Mol. Microbiol.">
        <title>Role of pathogenicity island-associated integrases in the genome plasticity of uropathogenic Escherichia coli strain 536.</title>
        <authorList>
            <person name="Hochhut B."/>
            <person name="Wilde C."/>
            <person name="Balling G."/>
            <person name="Middendorf B."/>
            <person name="Dobrindt U."/>
            <person name="Brzuszkiewicz E."/>
            <person name="Gottschalk G."/>
            <person name="Carniel E."/>
            <person name="Hacker J."/>
        </authorList>
    </citation>
    <scope>NUCLEOTIDE SEQUENCE [LARGE SCALE GENOMIC DNA]</scope>
    <source>
        <strain>536 / UPEC</strain>
    </source>
</reference>
<name>LGT_ECOL5</name>
<sequence length="291" mass="33108">MTSSYLHFPEFDPVIFSIGPVALHWYGLMYLVGFIFAMWLATRRANRPGSGWTKNEVENLLYAGFLGVFLGGRIGYVLFYNFPQFMADPLYLFRVWDGGMSFHGGLIGVIVVMIIFARRTKRSFFQVSDFIAPLIPFGLGAGRLGNFINGELWGRVDPNFPFAMLFPGSRTEDILLLQTNPQWQSIFDTYGVLPRHPSQLYELLLEGVVLFIILNLYIRKPRPMGAVSGLFLIGYGAFRIIVEFFRQPDAQFTGAWVQYISMGQILSIPMIVAGVIMMVWAYRRSPQQHVS</sequence>